<evidence type="ECO:0000255" key="1">
    <source>
        <dbReference type="HAMAP-Rule" id="MF_00101"/>
    </source>
</evidence>
<evidence type="ECO:0007829" key="2">
    <source>
        <dbReference type="PDB" id="3HYK"/>
    </source>
</evidence>
<gene>
    <name evidence="1" type="primary">acpS</name>
    <name type="ordered locus">BA_0250</name>
    <name type="ordered locus">GBAA_0250</name>
    <name type="ordered locus">BAS0236</name>
</gene>
<proteinExistence type="evidence at protein level"/>
<keyword id="KW-0002">3D-structure</keyword>
<keyword id="KW-0963">Cytoplasm</keyword>
<keyword id="KW-0275">Fatty acid biosynthesis</keyword>
<keyword id="KW-0276">Fatty acid metabolism</keyword>
<keyword id="KW-0444">Lipid biosynthesis</keyword>
<keyword id="KW-0443">Lipid metabolism</keyword>
<keyword id="KW-0460">Magnesium</keyword>
<keyword id="KW-0479">Metal-binding</keyword>
<keyword id="KW-1185">Reference proteome</keyword>
<keyword id="KW-0808">Transferase</keyword>
<sequence length="119" mass="13100">MIVGIGIDIIELNRIEKMLDGKLKFMERILTENERNVAKGLKGSRLTEFVAGRFAAKEAYSKAVGTGIGKEVSFLDIEVRNDDRGKPILITSTEHIVHLSISHSKEFAVAQVVLESSSS</sequence>
<comment type="function">
    <text evidence="1">Transfers the 4'-phosphopantetheine moiety from coenzyme A to a Ser of acyl-carrier-protein.</text>
</comment>
<comment type="catalytic activity">
    <reaction evidence="1">
        <text>apo-[ACP] + CoA = holo-[ACP] + adenosine 3',5'-bisphosphate + H(+)</text>
        <dbReference type="Rhea" id="RHEA:12068"/>
        <dbReference type="Rhea" id="RHEA-COMP:9685"/>
        <dbReference type="Rhea" id="RHEA-COMP:9690"/>
        <dbReference type="ChEBI" id="CHEBI:15378"/>
        <dbReference type="ChEBI" id="CHEBI:29999"/>
        <dbReference type="ChEBI" id="CHEBI:57287"/>
        <dbReference type="ChEBI" id="CHEBI:58343"/>
        <dbReference type="ChEBI" id="CHEBI:64479"/>
        <dbReference type="EC" id="2.7.8.7"/>
    </reaction>
</comment>
<comment type="cofactor">
    <cofactor evidence="1">
        <name>Mg(2+)</name>
        <dbReference type="ChEBI" id="CHEBI:18420"/>
    </cofactor>
</comment>
<comment type="subcellular location">
    <subcellularLocation>
        <location evidence="1">Cytoplasm</location>
    </subcellularLocation>
</comment>
<comment type="similarity">
    <text evidence="1">Belongs to the P-Pant transferase superfamily. AcpS family.</text>
</comment>
<protein>
    <recommendedName>
        <fullName evidence="1">Holo-[acyl-carrier-protein] synthase</fullName>
        <shortName evidence="1">Holo-ACP synthase</shortName>
        <ecNumber evidence="1">2.7.8.7</ecNumber>
    </recommendedName>
    <alternativeName>
        <fullName evidence="1">4'-phosphopantetheinyl transferase AcpS</fullName>
    </alternativeName>
</protein>
<name>ACPS_BACAN</name>
<dbReference type="EC" id="2.7.8.7" evidence="1"/>
<dbReference type="EMBL" id="AE016879">
    <property type="protein sequence ID" value="AAP24289.1"/>
    <property type="molecule type" value="Genomic_DNA"/>
</dbReference>
<dbReference type="EMBL" id="AE017334">
    <property type="protein sequence ID" value="AAT29331.1"/>
    <property type="molecule type" value="Genomic_DNA"/>
</dbReference>
<dbReference type="EMBL" id="AE017225">
    <property type="protein sequence ID" value="AAT52572.1"/>
    <property type="molecule type" value="Genomic_DNA"/>
</dbReference>
<dbReference type="RefSeq" id="NP_842803.1">
    <property type="nucleotide sequence ID" value="NC_003997.3"/>
</dbReference>
<dbReference type="RefSeq" id="WP_000635040.1">
    <property type="nucleotide sequence ID" value="NZ_WXXJ01000025.1"/>
</dbReference>
<dbReference type="RefSeq" id="YP_026521.1">
    <property type="nucleotide sequence ID" value="NC_005945.1"/>
</dbReference>
<dbReference type="PDB" id="3HYK">
    <property type="method" value="X-ray"/>
    <property type="resolution" value="2.31 A"/>
    <property type="chains" value="A/B/C=1-119"/>
</dbReference>
<dbReference type="PDBsum" id="3HYK"/>
<dbReference type="SMR" id="Q81JG3"/>
<dbReference type="STRING" id="261594.GBAA_0250"/>
<dbReference type="DNASU" id="1087043"/>
<dbReference type="GeneID" id="45020288"/>
<dbReference type="KEGG" id="ban:BA_0250"/>
<dbReference type="KEGG" id="bar:GBAA_0250"/>
<dbReference type="KEGG" id="bat:BAS0236"/>
<dbReference type="PATRIC" id="fig|198094.11.peg.244"/>
<dbReference type="eggNOG" id="COG0736">
    <property type="taxonomic scope" value="Bacteria"/>
</dbReference>
<dbReference type="HOGENOM" id="CLU_089696_1_2_9"/>
<dbReference type="OMA" id="DERHYAV"/>
<dbReference type="OrthoDB" id="517356at2"/>
<dbReference type="EvolutionaryTrace" id="Q81JG3"/>
<dbReference type="Proteomes" id="UP000000427">
    <property type="component" value="Chromosome"/>
</dbReference>
<dbReference type="Proteomes" id="UP000000594">
    <property type="component" value="Chromosome"/>
</dbReference>
<dbReference type="GO" id="GO:0005829">
    <property type="term" value="C:cytosol"/>
    <property type="evidence" value="ECO:0007669"/>
    <property type="project" value="TreeGrafter"/>
</dbReference>
<dbReference type="GO" id="GO:0008897">
    <property type="term" value="F:holo-[acyl-carrier-protein] synthase activity"/>
    <property type="evidence" value="ECO:0007669"/>
    <property type="project" value="UniProtKB-UniRule"/>
</dbReference>
<dbReference type="GO" id="GO:0000287">
    <property type="term" value="F:magnesium ion binding"/>
    <property type="evidence" value="ECO:0007669"/>
    <property type="project" value="UniProtKB-UniRule"/>
</dbReference>
<dbReference type="GO" id="GO:0006633">
    <property type="term" value="P:fatty acid biosynthetic process"/>
    <property type="evidence" value="ECO:0007669"/>
    <property type="project" value="UniProtKB-UniRule"/>
</dbReference>
<dbReference type="GO" id="GO:0019878">
    <property type="term" value="P:lysine biosynthetic process via aminoadipic acid"/>
    <property type="evidence" value="ECO:0007669"/>
    <property type="project" value="TreeGrafter"/>
</dbReference>
<dbReference type="Gene3D" id="3.90.470.20">
    <property type="entry name" value="4'-phosphopantetheinyl transferase domain"/>
    <property type="match status" value="1"/>
</dbReference>
<dbReference type="HAMAP" id="MF_00101">
    <property type="entry name" value="AcpS"/>
    <property type="match status" value="1"/>
</dbReference>
<dbReference type="InterPro" id="IPR008278">
    <property type="entry name" value="4-PPantetheinyl_Trfase_dom"/>
</dbReference>
<dbReference type="InterPro" id="IPR037143">
    <property type="entry name" value="4-PPantetheinyl_Trfase_dom_sf"/>
</dbReference>
<dbReference type="InterPro" id="IPR002582">
    <property type="entry name" value="ACPS"/>
</dbReference>
<dbReference type="InterPro" id="IPR050559">
    <property type="entry name" value="P-Pant_transferase_sf"/>
</dbReference>
<dbReference type="InterPro" id="IPR004568">
    <property type="entry name" value="Ppantetheine-prot_Trfase_dom"/>
</dbReference>
<dbReference type="NCBIfam" id="TIGR00516">
    <property type="entry name" value="acpS"/>
    <property type="match status" value="1"/>
</dbReference>
<dbReference type="NCBIfam" id="TIGR00556">
    <property type="entry name" value="pantethn_trn"/>
    <property type="match status" value="1"/>
</dbReference>
<dbReference type="PANTHER" id="PTHR12215:SF10">
    <property type="entry name" value="L-AMINOADIPATE-SEMIALDEHYDE DEHYDROGENASE-PHOSPHOPANTETHEINYL TRANSFERASE"/>
    <property type="match status" value="1"/>
</dbReference>
<dbReference type="PANTHER" id="PTHR12215">
    <property type="entry name" value="PHOSPHOPANTETHEINE TRANSFERASE"/>
    <property type="match status" value="1"/>
</dbReference>
<dbReference type="Pfam" id="PF01648">
    <property type="entry name" value="ACPS"/>
    <property type="match status" value="1"/>
</dbReference>
<dbReference type="SUPFAM" id="SSF56214">
    <property type="entry name" value="4'-phosphopantetheinyl transferase"/>
    <property type="match status" value="1"/>
</dbReference>
<accession>Q81JG3</accession>
<accession>Q6I4F9</accession>
<accession>Q6KY61</accession>
<reference key="1">
    <citation type="journal article" date="2003" name="Nature">
        <title>The genome sequence of Bacillus anthracis Ames and comparison to closely related bacteria.</title>
        <authorList>
            <person name="Read T.D."/>
            <person name="Peterson S.N."/>
            <person name="Tourasse N.J."/>
            <person name="Baillie L.W."/>
            <person name="Paulsen I.T."/>
            <person name="Nelson K.E."/>
            <person name="Tettelin H."/>
            <person name="Fouts D.E."/>
            <person name="Eisen J.A."/>
            <person name="Gill S.R."/>
            <person name="Holtzapple E.K."/>
            <person name="Okstad O.A."/>
            <person name="Helgason E."/>
            <person name="Rilstone J."/>
            <person name="Wu M."/>
            <person name="Kolonay J.F."/>
            <person name="Beanan M.J."/>
            <person name="Dodson R.J."/>
            <person name="Brinkac L.M."/>
            <person name="Gwinn M.L."/>
            <person name="DeBoy R.T."/>
            <person name="Madpu R."/>
            <person name="Daugherty S.C."/>
            <person name="Durkin A.S."/>
            <person name="Haft D.H."/>
            <person name="Nelson W.C."/>
            <person name="Peterson J.D."/>
            <person name="Pop M."/>
            <person name="Khouri H.M."/>
            <person name="Radune D."/>
            <person name="Benton J.L."/>
            <person name="Mahamoud Y."/>
            <person name="Jiang L."/>
            <person name="Hance I.R."/>
            <person name="Weidman J.F."/>
            <person name="Berry K.J."/>
            <person name="Plaut R.D."/>
            <person name="Wolf A.M."/>
            <person name="Watkins K.L."/>
            <person name="Nierman W.C."/>
            <person name="Hazen A."/>
            <person name="Cline R.T."/>
            <person name="Redmond C."/>
            <person name="Thwaite J.E."/>
            <person name="White O."/>
            <person name="Salzberg S.L."/>
            <person name="Thomason B."/>
            <person name="Friedlander A.M."/>
            <person name="Koehler T.M."/>
            <person name="Hanna P.C."/>
            <person name="Kolstoe A.-B."/>
            <person name="Fraser C.M."/>
        </authorList>
    </citation>
    <scope>NUCLEOTIDE SEQUENCE [LARGE SCALE GENOMIC DNA]</scope>
    <source>
        <strain>Ames / isolate Porton</strain>
    </source>
</reference>
<reference key="2">
    <citation type="journal article" date="2009" name="J. Bacteriol.">
        <title>The complete genome sequence of Bacillus anthracis Ames 'Ancestor'.</title>
        <authorList>
            <person name="Ravel J."/>
            <person name="Jiang L."/>
            <person name="Stanley S.T."/>
            <person name="Wilson M.R."/>
            <person name="Decker R.S."/>
            <person name="Read T.D."/>
            <person name="Worsham P."/>
            <person name="Keim P.S."/>
            <person name="Salzberg S.L."/>
            <person name="Fraser-Liggett C.M."/>
            <person name="Rasko D.A."/>
        </authorList>
    </citation>
    <scope>NUCLEOTIDE SEQUENCE [LARGE SCALE GENOMIC DNA]</scope>
    <source>
        <strain>Ames ancestor</strain>
    </source>
</reference>
<reference key="3">
    <citation type="submission" date="2004-01" db="EMBL/GenBank/DDBJ databases">
        <title>Complete genome sequence of Bacillus anthracis Sterne.</title>
        <authorList>
            <person name="Brettin T.S."/>
            <person name="Bruce D."/>
            <person name="Challacombe J.F."/>
            <person name="Gilna P."/>
            <person name="Han C."/>
            <person name="Hill K."/>
            <person name="Hitchcock P."/>
            <person name="Jackson P."/>
            <person name="Keim P."/>
            <person name="Longmire J."/>
            <person name="Lucas S."/>
            <person name="Okinaka R."/>
            <person name="Richardson P."/>
            <person name="Rubin E."/>
            <person name="Tice H."/>
        </authorList>
    </citation>
    <scope>NUCLEOTIDE SEQUENCE [LARGE SCALE GENOMIC DNA]</scope>
    <source>
        <strain>Sterne</strain>
    </source>
</reference>
<organism>
    <name type="scientific">Bacillus anthracis</name>
    <dbReference type="NCBI Taxonomy" id="1392"/>
    <lineage>
        <taxon>Bacteria</taxon>
        <taxon>Bacillati</taxon>
        <taxon>Bacillota</taxon>
        <taxon>Bacilli</taxon>
        <taxon>Bacillales</taxon>
        <taxon>Bacillaceae</taxon>
        <taxon>Bacillus</taxon>
        <taxon>Bacillus cereus group</taxon>
    </lineage>
</organism>
<feature type="chain" id="PRO_0000175606" description="Holo-[acyl-carrier-protein] synthase">
    <location>
        <begin position="1"/>
        <end position="119"/>
    </location>
</feature>
<feature type="binding site" evidence="1">
    <location>
        <position position="8"/>
    </location>
    <ligand>
        <name>Mg(2+)</name>
        <dbReference type="ChEBI" id="CHEBI:18420"/>
    </ligand>
</feature>
<feature type="binding site" evidence="1">
    <location>
        <position position="58"/>
    </location>
    <ligand>
        <name>Mg(2+)</name>
        <dbReference type="ChEBI" id="CHEBI:18420"/>
    </ligand>
</feature>
<feature type="strand" evidence="2">
    <location>
        <begin position="1"/>
        <end position="11"/>
    </location>
</feature>
<feature type="helix" evidence="2">
    <location>
        <begin position="12"/>
        <end position="19"/>
    </location>
</feature>
<feature type="helix" evidence="2">
    <location>
        <begin position="25"/>
        <end position="29"/>
    </location>
</feature>
<feature type="helix" evidence="2">
    <location>
        <begin position="32"/>
        <end position="38"/>
    </location>
</feature>
<feature type="helix" evidence="2">
    <location>
        <begin position="44"/>
        <end position="63"/>
    </location>
</feature>
<feature type="strand" evidence="2">
    <location>
        <begin position="68"/>
        <end position="71"/>
    </location>
</feature>
<feature type="helix" evidence="2">
    <location>
        <begin position="74"/>
        <end position="76"/>
    </location>
</feature>
<feature type="strand" evidence="2">
    <location>
        <begin position="78"/>
        <end position="81"/>
    </location>
</feature>
<feature type="strand" evidence="2">
    <location>
        <begin position="87"/>
        <end position="90"/>
    </location>
</feature>
<feature type="strand" evidence="2">
    <location>
        <begin position="94"/>
        <end position="103"/>
    </location>
</feature>
<feature type="strand" evidence="2">
    <location>
        <begin position="105"/>
        <end position="115"/>
    </location>
</feature>